<feature type="chain" id="PRO_0000363868" description="Probable metal-nicotianamine transporter YSL5">
    <location>
        <begin position="1"/>
        <end position="668"/>
    </location>
</feature>
<feature type="transmembrane region" description="Helical" evidence="2">
    <location>
        <begin position="27"/>
        <end position="47"/>
    </location>
</feature>
<feature type="transmembrane region" description="Helical" evidence="2">
    <location>
        <begin position="51"/>
        <end position="71"/>
    </location>
</feature>
<feature type="transmembrane region" description="Helical" evidence="2">
    <location>
        <begin position="102"/>
        <end position="122"/>
    </location>
</feature>
<feature type="transmembrane region" description="Helical" evidence="2">
    <location>
        <begin position="147"/>
        <end position="167"/>
    </location>
</feature>
<feature type="transmembrane region" description="Helical" evidence="2">
    <location>
        <begin position="209"/>
        <end position="229"/>
    </location>
</feature>
<feature type="transmembrane region" description="Helical" evidence="2">
    <location>
        <begin position="268"/>
        <end position="288"/>
    </location>
</feature>
<feature type="transmembrane region" description="Helical" evidence="2">
    <location>
        <begin position="315"/>
        <end position="335"/>
    </location>
</feature>
<feature type="transmembrane region" description="Helical" evidence="2">
    <location>
        <begin position="383"/>
        <end position="403"/>
    </location>
</feature>
<feature type="transmembrane region" description="Helical" evidence="2">
    <location>
        <begin position="410"/>
        <end position="430"/>
    </location>
</feature>
<feature type="transmembrane region" description="Helical" evidence="2">
    <location>
        <begin position="443"/>
        <end position="463"/>
    </location>
</feature>
<feature type="transmembrane region" description="Helical" evidence="2">
    <location>
        <begin position="501"/>
        <end position="521"/>
    </location>
</feature>
<feature type="transmembrane region" description="Helical" evidence="2">
    <location>
        <begin position="557"/>
        <end position="577"/>
    </location>
</feature>
<feature type="transmembrane region" description="Helical" evidence="2">
    <location>
        <begin position="595"/>
        <end position="615"/>
    </location>
</feature>
<feature type="transmembrane region" description="Helical" evidence="2">
    <location>
        <begin position="633"/>
        <end position="653"/>
    </location>
</feature>
<feature type="region of interest" description="Disordered" evidence="3">
    <location>
        <begin position="1"/>
        <end position="22"/>
    </location>
</feature>
<feature type="compositionally biased region" description="Low complexity" evidence="3">
    <location>
        <begin position="1"/>
        <end position="11"/>
    </location>
</feature>
<feature type="compositionally biased region" description="Pro residues" evidence="3">
    <location>
        <begin position="12"/>
        <end position="22"/>
    </location>
</feature>
<comment type="function">
    <text evidence="1">May be involved in the transport of nicotianamine-chelated metals.</text>
</comment>
<comment type="subcellular location">
    <subcellularLocation>
        <location evidence="5">Membrane</location>
        <topology evidence="5">Multi-pass membrane protein</topology>
    </subcellularLocation>
</comment>
<comment type="tissue specificity">
    <text evidence="4">Expressed in roots.</text>
</comment>
<comment type="similarity">
    <text evidence="5">Belongs to the YSL (TC 2.A.67.2) family.</text>
</comment>
<comment type="sequence caution" evidence="5">
    <conflict type="erroneous translation">
        <sequence resource="EMBL-CDS" id="BAE91885"/>
    </conflict>
    <text>Wrong choice of frame.</text>
</comment>
<comment type="sequence caution" evidence="5">
    <conflict type="miscellaneous discrepancy">
        <sequence resource="EMBL-CDS" id="BAE91885"/>
    </conflict>
    <text>Intron retention.</text>
</comment>
<comment type="sequence caution" evidence="5">
    <conflict type="erroneous gene model prediction">
        <sequence resource="EMBL-CDS" id="BAF14555"/>
    </conflict>
</comment>
<comment type="sequence caution" evidence="5">
    <conflict type="erroneous gene model prediction">
        <sequence resource="EMBL-CDS" id="CAE02279"/>
    </conflict>
</comment>
<proteinExistence type="evidence at transcript level"/>
<accession>Q7XRV1</accession>
<accession>Q0JDN2</accession>
<accession>Q25CI1</accession>
<gene>
    <name type="primary">YSL5</name>
    <name type="ordered locus">Os04g0390600</name>
    <name type="ordered locus">LOC_Os04g32060</name>
    <name type="ORF">OSJNBa0055C08.2</name>
</gene>
<protein>
    <recommendedName>
        <fullName>Probable metal-nicotianamine transporter YSL5</fullName>
    </recommendedName>
    <alternativeName>
        <fullName>Protein YELLOW STRIPE LIKE 5</fullName>
        <shortName>OsYSL5</shortName>
    </alternativeName>
</protein>
<evidence type="ECO:0000250" key="1"/>
<evidence type="ECO:0000255" key="2"/>
<evidence type="ECO:0000256" key="3">
    <source>
        <dbReference type="SAM" id="MobiDB-lite"/>
    </source>
</evidence>
<evidence type="ECO:0000269" key="4">
    <source>
    </source>
</evidence>
<evidence type="ECO:0000305" key="5"/>
<reference key="1">
    <citation type="journal article" date="2004" name="Plant J.">
        <title>OsYSL2 is a rice metal-nicotianamine transporter that is regulated by iron and expressed in the phloem.</title>
        <authorList>
            <person name="Koike S."/>
            <person name="Inoue H."/>
            <person name="Mizuno D."/>
            <person name="Takahashi M."/>
            <person name="Nakanishi H."/>
            <person name="Mori S."/>
            <person name="Nishizawa N.K."/>
        </authorList>
    </citation>
    <scope>NUCLEOTIDE SEQUENCE [MRNA]</scope>
    <scope>GENE FAMILY</scope>
    <scope>NOMENCLATURE</scope>
    <source>
        <strain>cv. Nipponbare</strain>
    </source>
</reference>
<reference key="2">
    <citation type="journal article" date="2002" name="Nature">
        <title>Sequence and analysis of rice chromosome 4.</title>
        <authorList>
            <person name="Feng Q."/>
            <person name="Zhang Y."/>
            <person name="Hao P."/>
            <person name="Wang S."/>
            <person name="Fu G."/>
            <person name="Huang Y."/>
            <person name="Li Y."/>
            <person name="Zhu J."/>
            <person name="Liu Y."/>
            <person name="Hu X."/>
            <person name="Jia P."/>
            <person name="Zhang Y."/>
            <person name="Zhao Q."/>
            <person name="Ying K."/>
            <person name="Yu S."/>
            <person name="Tang Y."/>
            <person name="Weng Q."/>
            <person name="Zhang L."/>
            <person name="Lu Y."/>
            <person name="Mu J."/>
            <person name="Lu Y."/>
            <person name="Zhang L.S."/>
            <person name="Yu Z."/>
            <person name="Fan D."/>
            <person name="Liu X."/>
            <person name="Lu T."/>
            <person name="Li C."/>
            <person name="Wu Y."/>
            <person name="Sun T."/>
            <person name="Lei H."/>
            <person name="Li T."/>
            <person name="Hu H."/>
            <person name="Guan J."/>
            <person name="Wu M."/>
            <person name="Zhang R."/>
            <person name="Zhou B."/>
            <person name="Chen Z."/>
            <person name="Chen L."/>
            <person name="Jin Z."/>
            <person name="Wang R."/>
            <person name="Yin H."/>
            <person name="Cai Z."/>
            <person name="Ren S."/>
            <person name="Lv G."/>
            <person name="Gu W."/>
            <person name="Zhu G."/>
            <person name="Tu Y."/>
            <person name="Jia J."/>
            <person name="Zhang Y."/>
            <person name="Chen J."/>
            <person name="Kang H."/>
            <person name="Chen X."/>
            <person name="Shao C."/>
            <person name="Sun Y."/>
            <person name="Hu Q."/>
            <person name="Zhang X."/>
            <person name="Zhang W."/>
            <person name="Wang L."/>
            <person name="Ding C."/>
            <person name="Sheng H."/>
            <person name="Gu J."/>
            <person name="Chen S."/>
            <person name="Ni L."/>
            <person name="Zhu F."/>
            <person name="Chen W."/>
            <person name="Lan L."/>
            <person name="Lai Y."/>
            <person name="Cheng Z."/>
            <person name="Gu M."/>
            <person name="Jiang J."/>
            <person name="Li J."/>
            <person name="Hong G."/>
            <person name="Xue Y."/>
            <person name="Han B."/>
        </authorList>
    </citation>
    <scope>NUCLEOTIDE SEQUENCE [LARGE SCALE GENOMIC DNA]</scope>
    <source>
        <strain>cv. Nipponbare</strain>
    </source>
</reference>
<reference key="3">
    <citation type="journal article" date="2005" name="Nature">
        <title>The map-based sequence of the rice genome.</title>
        <authorList>
            <consortium name="International rice genome sequencing project (IRGSP)"/>
        </authorList>
    </citation>
    <scope>NUCLEOTIDE SEQUENCE [LARGE SCALE GENOMIC DNA]</scope>
    <source>
        <strain>cv. Nipponbare</strain>
    </source>
</reference>
<reference key="4">
    <citation type="journal article" date="2008" name="Nucleic Acids Res.">
        <title>The rice annotation project database (RAP-DB): 2008 update.</title>
        <authorList>
            <consortium name="The rice annotation project (RAP)"/>
        </authorList>
    </citation>
    <scope>GENOME REANNOTATION</scope>
    <source>
        <strain>cv. Nipponbare</strain>
    </source>
</reference>
<reference key="5">
    <citation type="journal article" date="2013" name="Rice">
        <title>Improvement of the Oryza sativa Nipponbare reference genome using next generation sequence and optical map data.</title>
        <authorList>
            <person name="Kawahara Y."/>
            <person name="de la Bastide M."/>
            <person name="Hamilton J.P."/>
            <person name="Kanamori H."/>
            <person name="McCombie W.R."/>
            <person name="Ouyang S."/>
            <person name="Schwartz D.C."/>
            <person name="Tanaka T."/>
            <person name="Wu J."/>
            <person name="Zhou S."/>
            <person name="Childs K.L."/>
            <person name="Davidson R.M."/>
            <person name="Lin H."/>
            <person name="Quesada-Ocampo L."/>
            <person name="Vaillancourt B."/>
            <person name="Sakai H."/>
            <person name="Lee S.S."/>
            <person name="Kim J."/>
            <person name="Numa H."/>
            <person name="Itoh T."/>
            <person name="Buell C.R."/>
            <person name="Matsumoto T."/>
        </authorList>
    </citation>
    <scope>GENOME REANNOTATION</scope>
    <source>
        <strain>cv. Nipponbare</strain>
    </source>
</reference>
<reference key="6">
    <citation type="journal article" date="2009" name="J. Biol. Chem.">
        <title>Rice OsYSL15 is an iron-regulated iron(III)-deoxymugineic acid Transporter expressed in the roots and is essential for iron uptake in early growth of the seedlings.</title>
        <authorList>
            <person name="Inoue H."/>
            <person name="Kobayashi T."/>
            <person name="Nozoye T."/>
            <person name="Takahashi M."/>
            <person name="Kakei Y."/>
            <person name="Suzuki K."/>
            <person name="Nakazono M."/>
            <person name="Nakanishi H."/>
            <person name="Mori S."/>
            <person name="Nishizawa N.K."/>
        </authorList>
    </citation>
    <scope>TISSUE SPECIFICITY</scope>
</reference>
<organism>
    <name type="scientific">Oryza sativa subsp. japonica</name>
    <name type="common">Rice</name>
    <dbReference type="NCBI Taxonomy" id="39947"/>
    <lineage>
        <taxon>Eukaryota</taxon>
        <taxon>Viridiplantae</taxon>
        <taxon>Streptophyta</taxon>
        <taxon>Embryophyta</taxon>
        <taxon>Tracheophyta</taxon>
        <taxon>Spermatophyta</taxon>
        <taxon>Magnoliopsida</taxon>
        <taxon>Liliopsida</taxon>
        <taxon>Poales</taxon>
        <taxon>Poaceae</taxon>
        <taxon>BOP clade</taxon>
        <taxon>Oryzoideae</taxon>
        <taxon>Oryzeae</taxon>
        <taxon>Oryzinae</taxon>
        <taxon>Oryza</taxon>
        <taxon>Oryza sativa</taxon>
    </lineage>
</organism>
<name>YSL5_ORYSJ</name>
<keyword id="KW-0472">Membrane</keyword>
<keyword id="KW-1185">Reference proteome</keyword>
<keyword id="KW-0812">Transmembrane</keyword>
<keyword id="KW-1133">Transmembrane helix</keyword>
<keyword id="KW-0813">Transport</keyword>
<sequence length="668" mass="72727">MPPPETSSAAAPSPPSPDPLPPWRDQLTLRGVAVAAVLGSLLCVVIHRLNLTVGVIPALNVASGLLAFFLATAWRGAAAVLGLGHHRGRPFTRQENTVIQTCAIACGSLAFSGCSSSYIFAMDRKTYELVGQDYPGNRMEDIRDPSLGWMIGFMFLIALIGPFSIVMLRKVMVIDYKLAFPGGTATALMINSLHGKTEADLAGRKVHCLVKYMSLSFGWSFFKWFFSGVGDSCGFDNFPSFGIEAFKNTFYFNFNPSYVGYGLISPHIVNCSVFLGSVISWGFLWPFIAKQAGDWYPDNLSNTDFRGLYGYKVFIAISVILGDGLYNLVKVFLIIAKEICNARSKEHDLPVQALLQDDDSSRQLLDEKRQTEIFLKDSIPTWLAVSGYIVLAAISTVAVPIIFPQLKWYLVLVCYFLAPAIAFCNSYGMGLTNLNLAPTYGKIALFVFASLVGSDGGVIAGLAACGVIMSIVCSTADLMQDFKSGYLTLSSPRSMFISQMIGVALGCIIAPLTLWLFWTAFDIGDPDGEYKAPFAIIFREMAIIGIEGFAALPRHCLEICCVFFLAALIINLMKDVVPNHVSRFIPIPMAMAVPFYIGAYFGVDMFIGTLILFAWQKIDRREADDYAVAVASGLICGDGVWSIPSAVLSILGVDPPICMSFRPSSASV</sequence>
<dbReference type="EMBL" id="AB190915">
    <property type="protein sequence ID" value="BAE91885.1"/>
    <property type="status" value="ALT_SEQ"/>
    <property type="molecule type" value="mRNA"/>
</dbReference>
<dbReference type="EMBL" id="AL731600">
    <property type="protein sequence ID" value="CAE02279.2"/>
    <property type="status" value="ALT_SEQ"/>
    <property type="molecule type" value="Genomic_DNA"/>
</dbReference>
<dbReference type="EMBL" id="AP008210">
    <property type="protein sequence ID" value="BAF14555.1"/>
    <property type="status" value="ALT_SEQ"/>
    <property type="molecule type" value="Genomic_DNA"/>
</dbReference>
<dbReference type="EMBL" id="AP014960">
    <property type="status" value="NOT_ANNOTATED_CDS"/>
    <property type="molecule type" value="Genomic_DNA"/>
</dbReference>
<dbReference type="SMR" id="Q7XRV1"/>
<dbReference type="FunCoup" id="Q7XRV1">
    <property type="interactions" value="53"/>
</dbReference>
<dbReference type="STRING" id="39947.Q7XRV1"/>
<dbReference type="PaxDb" id="39947-Q7XRV1"/>
<dbReference type="KEGG" id="dosa:Os04g0390600"/>
<dbReference type="eggNOG" id="ENOG502QQ2H">
    <property type="taxonomic scope" value="Eukaryota"/>
</dbReference>
<dbReference type="InParanoid" id="Q7XRV1"/>
<dbReference type="Proteomes" id="UP000000763">
    <property type="component" value="Chromosome 4"/>
</dbReference>
<dbReference type="Proteomes" id="UP000059680">
    <property type="component" value="Chromosome 4"/>
</dbReference>
<dbReference type="GO" id="GO:0005774">
    <property type="term" value="C:vacuolar membrane"/>
    <property type="evidence" value="ECO:0000318"/>
    <property type="project" value="GO_Central"/>
</dbReference>
<dbReference type="GO" id="GO:0035673">
    <property type="term" value="F:oligopeptide transmembrane transporter activity"/>
    <property type="evidence" value="ECO:0007669"/>
    <property type="project" value="InterPro"/>
</dbReference>
<dbReference type="InterPro" id="IPR004813">
    <property type="entry name" value="OPT"/>
</dbReference>
<dbReference type="InterPro" id="IPR045035">
    <property type="entry name" value="YSL-like"/>
</dbReference>
<dbReference type="NCBIfam" id="TIGR00728">
    <property type="entry name" value="OPT_sfam"/>
    <property type="match status" value="1"/>
</dbReference>
<dbReference type="PANTHER" id="PTHR31645:SF16">
    <property type="entry name" value="METAL-NICOTIANAMINE TRANSPORTER YSL5-RELATED"/>
    <property type="match status" value="1"/>
</dbReference>
<dbReference type="PANTHER" id="PTHR31645">
    <property type="entry name" value="OLIGOPEPTIDE TRANSPORTER YGL114W-RELATED"/>
    <property type="match status" value="1"/>
</dbReference>
<dbReference type="Pfam" id="PF03169">
    <property type="entry name" value="OPT"/>
    <property type="match status" value="1"/>
</dbReference>